<proteinExistence type="inferred from homology"/>
<comment type="function">
    <text evidence="1">Condensation of UDP-2,3-diacylglucosamine and 2,3-diacylglucosamine-1-phosphate to form lipid A disaccharide, a precursor of lipid A, a phosphorylated glycolipid that anchors the lipopolysaccharide to the outer membrane of the cell.</text>
</comment>
<comment type="catalytic activity">
    <reaction evidence="1">
        <text>2-N,3-O-bis[(3R)-3-hydroxytetradecanoyl]-alpha-D-glucosaminyl 1-phosphate + UDP-2-N,3-O-bis[(3R)-3-hydroxytetradecanoyl]-alpha-D-glucosamine = lipid A disaccharide (E. coli) + UDP + H(+)</text>
        <dbReference type="Rhea" id="RHEA:22668"/>
        <dbReference type="ChEBI" id="CHEBI:15378"/>
        <dbReference type="ChEBI" id="CHEBI:57957"/>
        <dbReference type="ChEBI" id="CHEBI:58223"/>
        <dbReference type="ChEBI" id="CHEBI:58466"/>
        <dbReference type="ChEBI" id="CHEBI:78847"/>
    </reaction>
</comment>
<comment type="catalytic activity">
    <reaction evidence="1">
        <text>a lipid X + a UDP-2-N,3-O-bis[(3R)-3-hydroxyacyl]-alpha-D-glucosamine = a lipid A disaccharide + UDP + H(+)</text>
        <dbReference type="Rhea" id="RHEA:67828"/>
        <dbReference type="ChEBI" id="CHEBI:15378"/>
        <dbReference type="ChEBI" id="CHEBI:58223"/>
        <dbReference type="ChEBI" id="CHEBI:137748"/>
        <dbReference type="ChEBI" id="CHEBI:176338"/>
        <dbReference type="ChEBI" id="CHEBI:176343"/>
        <dbReference type="EC" id="2.4.1.182"/>
    </reaction>
</comment>
<comment type="pathway">
    <text evidence="1">Glycolipid biosynthesis; lipid IV(A) biosynthesis; lipid IV(A) from (3R)-3-hydroxytetradecanoyl-[acyl-carrier-protein] and UDP-N-acetyl-alpha-D-glucosamine: step 5/6.</text>
</comment>
<comment type="similarity">
    <text evidence="1">Belongs to the LpxB family.</text>
</comment>
<protein>
    <recommendedName>
        <fullName evidence="1">Lipid-A-disaccharide synthase</fullName>
        <ecNumber evidence="1">2.4.1.182</ecNumber>
    </recommendedName>
</protein>
<accession>B6HZF6</accession>
<sequence length="382" mass="42401">MTEQRPLTIALVAGETSGDILGAGLIRALKERVPNARFVGVAGPRMQAEGCEAWYEMEELAVMGIVEVLGRLRRLLHIRADLTKRFGELKPDVFVGIDAPDFNITLEGNLKKQGIKTIHYVSPSVWAWRQKRVFKIGRATDLVLAFLPFEKAFYDKYNVPCRFIGHTMADAMPLDPDKNAARDVLGIPHDAHCLALLPGSRGAEVEMLSADFLKTAQLLRQTYPDLEIVVPLVNAKRREQFERIKAEVAPDLSVHLLDGMGREAMVASDAALLASGTAALECMLAKCPMVVGYRMKPFTFWLAKRLVKTDYVSLPNLLAGRELVKELLQEECEPQKLAAALLPLLANGKTSHAMHDTFRELHQQIRCNADEQAAQAVLELAQ</sequence>
<reference key="1">
    <citation type="journal article" date="2008" name="DNA Res.">
        <title>Complete genome sequence and comparative analysis of the wild-type commensal Escherichia coli strain SE11 isolated from a healthy adult.</title>
        <authorList>
            <person name="Oshima K."/>
            <person name="Toh H."/>
            <person name="Ogura Y."/>
            <person name="Sasamoto H."/>
            <person name="Morita H."/>
            <person name="Park S.-H."/>
            <person name="Ooka T."/>
            <person name="Iyoda S."/>
            <person name="Taylor T.D."/>
            <person name="Hayashi T."/>
            <person name="Itoh K."/>
            <person name="Hattori M."/>
        </authorList>
    </citation>
    <scope>NUCLEOTIDE SEQUENCE [LARGE SCALE GENOMIC DNA]</scope>
    <source>
        <strain>SE11</strain>
    </source>
</reference>
<evidence type="ECO:0000255" key="1">
    <source>
        <dbReference type="HAMAP-Rule" id="MF_00392"/>
    </source>
</evidence>
<name>LPXB_ECOSE</name>
<organism>
    <name type="scientific">Escherichia coli (strain SE11)</name>
    <dbReference type="NCBI Taxonomy" id="409438"/>
    <lineage>
        <taxon>Bacteria</taxon>
        <taxon>Pseudomonadati</taxon>
        <taxon>Pseudomonadota</taxon>
        <taxon>Gammaproteobacteria</taxon>
        <taxon>Enterobacterales</taxon>
        <taxon>Enterobacteriaceae</taxon>
        <taxon>Escherichia</taxon>
    </lineage>
</organism>
<keyword id="KW-0328">Glycosyltransferase</keyword>
<keyword id="KW-0441">Lipid A biosynthesis</keyword>
<keyword id="KW-0444">Lipid biosynthesis</keyword>
<keyword id="KW-0443">Lipid metabolism</keyword>
<keyword id="KW-0808">Transferase</keyword>
<feature type="chain" id="PRO_1000191476" description="Lipid-A-disaccharide synthase">
    <location>
        <begin position="1"/>
        <end position="382"/>
    </location>
</feature>
<gene>
    <name evidence="1" type="primary">lpxB</name>
    <name type="ordered locus">ECSE_0181</name>
</gene>
<dbReference type="EC" id="2.4.1.182" evidence="1"/>
<dbReference type="EMBL" id="AP009240">
    <property type="protein sequence ID" value="BAG75705.1"/>
    <property type="molecule type" value="Genomic_DNA"/>
</dbReference>
<dbReference type="RefSeq" id="WP_000139667.1">
    <property type="nucleotide sequence ID" value="NC_011415.1"/>
</dbReference>
<dbReference type="SMR" id="B6HZF6"/>
<dbReference type="CAZy" id="GT19">
    <property type="family name" value="Glycosyltransferase Family 19"/>
</dbReference>
<dbReference type="GeneID" id="75202005"/>
<dbReference type="KEGG" id="ecy:ECSE_0181"/>
<dbReference type="HOGENOM" id="CLU_036577_3_0_6"/>
<dbReference type="UniPathway" id="UPA00359">
    <property type="reaction ID" value="UER00481"/>
</dbReference>
<dbReference type="Proteomes" id="UP000008199">
    <property type="component" value="Chromosome"/>
</dbReference>
<dbReference type="GO" id="GO:0016020">
    <property type="term" value="C:membrane"/>
    <property type="evidence" value="ECO:0007669"/>
    <property type="project" value="GOC"/>
</dbReference>
<dbReference type="GO" id="GO:0008915">
    <property type="term" value="F:lipid-A-disaccharide synthase activity"/>
    <property type="evidence" value="ECO:0007669"/>
    <property type="project" value="UniProtKB-UniRule"/>
</dbReference>
<dbReference type="GO" id="GO:0005543">
    <property type="term" value="F:phospholipid binding"/>
    <property type="evidence" value="ECO:0007669"/>
    <property type="project" value="TreeGrafter"/>
</dbReference>
<dbReference type="GO" id="GO:0009245">
    <property type="term" value="P:lipid A biosynthetic process"/>
    <property type="evidence" value="ECO:0007669"/>
    <property type="project" value="UniProtKB-UniRule"/>
</dbReference>
<dbReference type="CDD" id="cd01635">
    <property type="entry name" value="Glycosyltransferase_GTB-type"/>
    <property type="match status" value="1"/>
</dbReference>
<dbReference type="HAMAP" id="MF_00392">
    <property type="entry name" value="LpxB"/>
    <property type="match status" value="1"/>
</dbReference>
<dbReference type="InterPro" id="IPR003835">
    <property type="entry name" value="Glyco_trans_19"/>
</dbReference>
<dbReference type="NCBIfam" id="TIGR00215">
    <property type="entry name" value="lpxB"/>
    <property type="match status" value="1"/>
</dbReference>
<dbReference type="PANTHER" id="PTHR30372">
    <property type="entry name" value="LIPID-A-DISACCHARIDE SYNTHASE"/>
    <property type="match status" value="1"/>
</dbReference>
<dbReference type="PANTHER" id="PTHR30372:SF4">
    <property type="entry name" value="LIPID-A-DISACCHARIDE SYNTHASE, MITOCHONDRIAL-RELATED"/>
    <property type="match status" value="1"/>
</dbReference>
<dbReference type="Pfam" id="PF02684">
    <property type="entry name" value="LpxB"/>
    <property type="match status" value="1"/>
</dbReference>
<dbReference type="SUPFAM" id="SSF53756">
    <property type="entry name" value="UDP-Glycosyltransferase/glycogen phosphorylase"/>
    <property type="match status" value="1"/>
</dbReference>